<keyword id="KW-0165">Cleavage on pair of basic residues</keyword>
<keyword id="KW-0325">Glycoprotein</keyword>
<keyword id="KW-0339">Growth factor</keyword>
<keyword id="KW-0964">Secreted</keyword>
<keyword id="KW-0732">Signal</keyword>
<accession>Q1X6Y8</accession>
<evidence type="ECO:0000250" key="1"/>
<evidence type="ECO:0000255" key="2"/>
<evidence type="ECO:0000305" key="3"/>
<name>NTF3_SANME</name>
<proteinExistence type="inferred from homology"/>
<protein>
    <recommendedName>
        <fullName>Neurotrophin-3</fullName>
        <shortName>NT-3</shortName>
    </recommendedName>
</protein>
<dbReference type="EMBL" id="AY988050">
    <property type="protein sequence ID" value="AAY44257.1"/>
    <property type="molecule type" value="Genomic_DNA"/>
</dbReference>
<dbReference type="SMR" id="Q1X6Y8"/>
<dbReference type="GlyCosmos" id="Q1X6Y8">
    <property type="glycosylation" value="1 site, No reported glycans"/>
</dbReference>
<dbReference type="GO" id="GO:0030424">
    <property type="term" value="C:axon"/>
    <property type="evidence" value="ECO:0007669"/>
    <property type="project" value="TreeGrafter"/>
</dbReference>
<dbReference type="GO" id="GO:0030425">
    <property type="term" value="C:dendrite"/>
    <property type="evidence" value="ECO:0007669"/>
    <property type="project" value="TreeGrafter"/>
</dbReference>
<dbReference type="GO" id="GO:0005615">
    <property type="term" value="C:extracellular space"/>
    <property type="evidence" value="ECO:0007669"/>
    <property type="project" value="TreeGrafter"/>
</dbReference>
<dbReference type="GO" id="GO:0008021">
    <property type="term" value="C:synaptic vesicle"/>
    <property type="evidence" value="ECO:0007669"/>
    <property type="project" value="TreeGrafter"/>
</dbReference>
<dbReference type="GO" id="GO:0008083">
    <property type="term" value="F:growth factor activity"/>
    <property type="evidence" value="ECO:0007669"/>
    <property type="project" value="UniProtKB-KW"/>
</dbReference>
<dbReference type="GO" id="GO:0005163">
    <property type="term" value="F:nerve growth factor receptor binding"/>
    <property type="evidence" value="ECO:0007669"/>
    <property type="project" value="TreeGrafter"/>
</dbReference>
<dbReference type="GO" id="GO:0007169">
    <property type="term" value="P:cell surface receptor protein tyrosine kinase signaling pathway"/>
    <property type="evidence" value="ECO:0007669"/>
    <property type="project" value="TreeGrafter"/>
</dbReference>
<dbReference type="GO" id="GO:0050804">
    <property type="term" value="P:modulation of chemical synaptic transmission"/>
    <property type="evidence" value="ECO:0007669"/>
    <property type="project" value="TreeGrafter"/>
</dbReference>
<dbReference type="GO" id="GO:0043524">
    <property type="term" value="P:negative regulation of neuron apoptotic process"/>
    <property type="evidence" value="ECO:0007669"/>
    <property type="project" value="TreeGrafter"/>
</dbReference>
<dbReference type="GO" id="GO:0021675">
    <property type="term" value="P:nerve development"/>
    <property type="evidence" value="ECO:0007669"/>
    <property type="project" value="TreeGrafter"/>
</dbReference>
<dbReference type="GO" id="GO:0038180">
    <property type="term" value="P:nerve growth factor signaling pathway"/>
    <property type="evidence" value="ECO:0007669"/>
    <property type="project" value="TreeGrafter"/>
</dbReference>
<dbReference type="GO" id="GO:0048812">
    <property type="term" value="P:neuron projection morphogenesis"/>
    <property type="evidence" value="ECO:0007669"/>
    <property type="project" value="TreeGrafter"/>
</dbReference>
<dbReference type="Gene3D" id="2.10.90.10">
    <property type="entry name" value="Cystine-knot cytokines"/>
    <property type="match status" value="1"/>
</dbReference>
<dbReference type="InterPro" id="IPR029034">
    <property type="entry name" value="Cystine-knot_cytokine"/>
</dbReference>
<dbReference type="InterPro" id="IPR020408">
    <property type="entry name" value="Nerve_growth_factor-like"/>
</dbReference>
<dbReference type="InterPro" id="IPR002072">
    <property type="entry name" value="Nerve_growth_factor-rel"/>
</dbReference>
<dbReference type="InterPro" id="IPR015578">
    <property type="entry name" value="Neurotrophin-3"/>
</dbReference>
<dbReference type="InterPro" id="IPR045815">
    <property type="entry name" value="NTF3_N"/>
</dbReference>
<dbReference type="PANTHER" id="PTHR11589">
    <property type="entry name" value="NERVE GROWTH FACTOR NGF -RELATED"/>
    <property type="match status" value="1"/>
</dbReference>
<dbReference type="PANTHER" id="PTHR11589:SF4">
    <property type="entry name" value="NEUROTROPHIN-3"/>
    <property type="match status" value="1"/>
</dbReference>
<dbReference type="Pfam" id="PF00243">
    <property type="entry name" value="NGF"/>
    <property type="match status" value="1"/>
</dbReference>
<dbReference type="Pfam" id="PF19338">
    <property type="entry name" value="NTF3_N"/>
    <property type="match status" value="1"/>
</dbReference>
<dbReference type="PIRSF" id="PIRSF001789">
    <property type="entry name" value="NGF"/>
    <property type="match status" value="1"/>
</dbReference>
<dbReference type="PRINTS" id="PR01914">
    <property type="entry name" value="NEUROTROPHN3"/>
</dbReference>
<dbReference type="SMART" id="SM00140">
    <property type="entry name" value="NGF"/>
    <property type="match status" value="1"/>
</dbReference>
<dbReference type="SUPFAM" id="SSF57501">
    <property type="entry name" value="Cystine-knot cytokines"/>
    <property type="match status" value="1"/>
</dbReference>
<dbReference type="PROSITE" id="PS50270">
    <property type="entry name" value="NGF_2"/>
    <property type="match status" value="1"/>
</dbReference>
<comment type="function">
    <text evidence="1">Seems to promote the survival of visceral and proprioceptive sensory neurons.</text>
</comment>
<comment type="subcellular location">
    <subcellularLocation>
        <location evidence="1">Secreted</location>
    </subcellularLocation>
</comment>
<comment type="similarity">
    <text evidence="3">Belongs to the NGF-beta family.</text>
</comment>
<feature type="signal peptide" evidence="2">
    <location>
        <begin position="1" status="less than"/>
        <end position="3"/>
    </location>
</feature>
<feature type="propeptide" id="PRO_0000346745" evidence="1">
    <location>
        <begin position="4"/>
        <end position="120"/>
    </location>
</feature>
<feature type="chain" id="PRO_0000346746" description="Neurotrophin-3">
    <location>
        <begin position="121"/>
        <end position="164" status="greater than"/>
    </location>
</feature>
<feature type="glycosylation site" description="N-linked (GlcNAc...) asparagine" evidence="2">
    <location>
        <position position="113"/>
    </location>
</feature>
<feature type="non-terminal residue">
    <location>
        <position position="1"/>
    </location>
</feature>
<feature type="non-terminal residue">
    <location>
        <position position="164"/>
    </location>
</feature>
<organism>
    <name type="scientific">Sanzinia madagascariensis</name>
    <name type="common">Madagascar tree boa</name>
    <name type="synonym">Boa manditra</name>
    <dbReference type="NCBI Taxonomy" id="51881"/>
    <lineage>
        <taxon>Eukaryota</taxon>
        <taxon>Metazoa</taxon>
        <taxon>Chordata</taxon>
        <taxon>Craniata</taxon>
        <taxon>Vertebrata</taxon>
        <taxon>Euteleostomi</taxon>
        <taxon>Lepidosauria</taxon>
        <taxon>Squamata</taxon>
        <taxon>Bifurcata</taxon>
        <taxon>Unidentata</taxon>
        <taxon>Episquamata</taxon>
        <taxon>Toxicofera</taxon>
        <taxon>Serpentes</taxon>
        <taxon>Henophidia</taxon>
        <taxon>Boidae</taxon>
        <taxon>Boinae</taxon>
        <taxon>Sanzinia</taxon>
    </lineage>
</organism>
<sequence>IQSTNMDQQGSLTEDSMNSFIRTLIQAGIWKNKVPKQTARAKDDTQTTVKKTEAEADAVASKEARLGFQPIVSVDAELLRQQRRFSSPRVLLSENTPLEPPPLYLTEQPVALNRTSRRKREGKSHRGEYSVCDSESRWVTDKSSAVDIRGHQVTVLGEIRMGPS</sequence>
<gene>
    <name type="primary">NTF3</name>
</gene>
<reference key="1">
    <citation type="journal article" date="2006" name="Mol. Phylogenet. Evol.">
        <title>Dispersal and vicariance: the complex evolutionary history of boid snakes.</title>
        <authorList>
            <person name="Noonan B.P."/>
            <person name="Chippindale P.T."/>
        </authorList>
    </citation>
    <scope>NUCLEOTIDE SEQUENCE [GENOMIC DNA]</scope>
</reference>